<sequence length="20" mass="2339">GYLDYDEVDDNRAKLPLDAR</sequence>
<keyword id="KW-1064">Adaptive immunity</keyword>
<keyword id="KW-0094">Blood coagulation</keyword>
<keyword id="KW-0175">Coiled coil</keyword>
<keyword id="KW-0903">Direct protein sequencing</keyword>
<keyword id="KW-1015">Disulfide bond</keyword>
<keyword id="KW-0356">Hemostasis</keyword>
<keyword id="KW-0391">Immunity</keyword>
<keyword id="KW-0399">Innate immunity</keyword>
<keyword id="KW-1185">Reference proteome</keyword>
<keyword id="KW-0964">Secreted</keyword>
<keyword id="KW-0765">Sulfation</keyword>
<gene>
    <name type="primary">FGB</name>
</gene>
<evidence type="ECO:0000250" key="1">
    <source>
        <dbReference type="UniProtKB" id="E9PV24"/>
    </source>
</evidence>
<evidence type="ECO:0000250" key="2">
    <source>
        <dbReference type="UniProtKB" id="P02675"/>
    </source>
</evidence>
<evidence type="ECO:0000269" key="3">
    <source ref="1"/>
</evidence>
<dbReference type="Proteomes" id="UP000002356">
    <property type="component" value="Unplaced"/>
</dbReference>
<dbReference type="GO" id="GO:0005576">
    <property type="term" value="C:extracellular region"/>
    <property type="evidence" value="ECO:0007669"/>
    <property type="project" value="UniProtKB-SubCell"/>
</dbReference>
<dbReference type="GO" id="GO:0002250">
    <property type="term" value="P:adaptive immune response"/>
    <property type="evidence" value="ECO:0007669"/>
    <property type="project" value="UniProtKB-KW"/>
</dbReference>
<dbReference type="GO" id="GO:0007596">
    <property type="term" value="P:blood coagulation"/>
    <property type="evidence" value="ECO:0007669"/>
    <property type="project" value="UniProtKB-KW"/>
</dbReference>
<dbReference type="GO" id="GO:0045087">
    <property type="term" value="P:innate immune response"/>
    <property type="evidence" value="ECO:0007669"/>
    <property type="project" value="UniProtKB-KW"/>
</dbReference>
<protein>
    <recommendedName>
        <fullName>Fibrinogen beta chain</fullName>
    </recommendedName>
    <component>
        <recommendedName>
            <fullName>Fibrinopeptide B</fullName>
        </recommendedName>
    </component>
</protein>
<accession>P68116</accession>
<accession>P14470</accession>
<comment type="function">
    <text evidence="1">Cleaved by the protease thrombin to yield monomers which, together with fibrinogen alpha (FGA) and fibrinogen gamma (FGG), polymerize to form an insoluble fibrin matrix. Fibrin has a major function in hemostasis as one of the primary components of blood clots. In addition, functions during the early stages of wound repair to stabilize the lesion and guide cell migration during re-epithelialization. Was originally thought to be essential for platelet aggregation, based on in vitro studies using anticoagulated blood. However subsequent studies have shown that it is not absolutely required for thrombus formation in vivo. Enhances expression of SELP in activated platelets. Maternal fibrinogen is essential for successful pregnancy. Fibrin deposition is also associated with infection, where it protects against IFNG-mediated hemorrhage. May also facilitate the antibacterial immune response via both innate and T-cell mediated pathways.</text>
</comment>
<comment type="subunit">
    <text evidence="2">Heterohexamer; disulfide linked. Contains 2 sets of 3 non-identical chains (alpha, beta and gamma). The 2 heterotrimers are in head to head conformation with the N-termini in a small central domain (By similarity).</text>
</comment>
<comment type="subcellular location">
    <subcellularLocation>
        <location>Secreted</location>
    </subcellularLocation>
</comment>
<comment type="domain">
    <text evidence="2">A long coiled coil structure formed by 3 polypeptide chains connects the central nodule to the C-terminal domains (distal nodules). The long C-terminal ends of the alpha chains fold back, contributing a fourth strand to the coiled coil structure.</text>
</comment>
<comment type="PTM">
    <text>Conversion of fibrinogen to fibrin is triggered by thrombin, which cleaves fibrinopeptides A and B from alpha and beta chains, and thus exposes the N-terminal polymerization sites responsible for the formation of the soft clot.</text>
</comment>
<feature type="peptide" id="PRO_0000009087" description="Fibrinopeptide B">
    <location>
        <begin position="1"/>
        <end position="20"/>
    </location>
</feature>
<feature type="modified residue" description="Sulfotyrosine" evidence="3">
    <location>
        <position position="5"/>
    </location>
</feature>
<feature type="non-terminal residue">
    <location>
        <position position="20"/>
    </location>
</feature>
<proteinExistence type="evidence at protein level"/>
<organism>
    <name type="scientific">Ovis aries</name>
    <name type="common">Sheep</name>
    <dbReference type="NCBI Taxonomy" id="9940"/>
    <lineage>
        <taxon>Eukaryota</taxon>
        <taxon>Metazoa</taxon>
        <taxon>Chordata</taxon>
        <taxon>Craniata</taxon>
        <taxon>Vertebrata</taxon>
        <taxon>Euteleostomi</taxon>
        <taxon>Mammalia</taxon>
        <taxon>Eutheria</taxon>
        <taxon>Laurasiatheria</taxon>
        <taxon>Artiodactyla</taxon>
        <taxon>Ruminantia</taxon>
        <taxon>Pecora</taxon>
        <taxon>Bovidae</taxon>
        <taxon>Caprinae</taxon>
        <taxon>Ovis</taxon>
    </lineage>
</organism>
<reference key="1">
    <citation type="journal article" date="1965" name="Acta Chem. Scand.">
        <title>Studies on fibrinopeptides from mammals.</title>
        <authorList>
            <person name="Blombaeck B."/>
            <person name="Blombaeck M."/>
            <person name="Grondahl N.J."/>
        </authorList>
    </citation>
    <scope>PROTEIN SEQUENCE</scope>
    <scope>SULFATION AT TYR-5</scope>
</reference>
<name>FIBB_SHEEP</name>